<name>Y964_METJA</name>
<sequence length="680" mass="75843">MVMGYRVGIDIGGTFTDLVYFDEYSKEFHVVKVPTTPKSPDVGAINAIETAKIEFDKINILIHATTLGTNMFLGQEHLNPPKIALITTKGFKDVIEIGRQRRPKLYDLFFEKPKPLIKRRDRYEVEERIDANGNIITPLNEEELQKIAEIIKKKDYEVVVISFLHSYKNPIHEKKAREIIKNLCSNVDVITSYEINPEYKEYERTSTTVINAYLKPLVSNYLKNFIDSLKNKGFNGKFYVMQSSGGISNIKYATERPAAFIESGPAAGAIAVAYFSKILNDNKVIGFDMGGTTAKASTIINNSPLVTNEYEVGGEVHAGRLIKGSGYPVRFPFIDLAEVSAGGGTIAWVDEGNALRVGPISAGADPGPVCYGKGNDKPTITDANLILGRLGEKLSGGLLKLRKDLAEKAISKLAEKIGESVEEIAYGIIRLANTTMAKALRIVTVERGYDPRDFVMYVFGGAGPLHGVELAEEMEISSILIPPSCGVFSALGLLLADCRVDKAKSILKDIDEVDEEEIENIFIELIEEGLKEVEGFEEIKIVKQIDVRYKGQSYELTIPWTGDLKELADNFHKKHETVYKFSSLEEDIELVNARVTIIGLLTKPEIKCYEVKEYKPKPESYRKVYFSSGWEETAIYNRDKLKPGAIFEGPAVVEEYDSTIVIPPDYTAFVDKYGCLRIER</sequence>
<dbReference type="EMBL" id="L77117">
    <property type="protein sequence ID" value="AAB98966.1"/>
    <property type="molecule type" value="Genomic_DNA"/>
</dbReference>
<dbReference type="PIR" id="D64420">
    <property type="entry name" value="D64420"/>
</dbReference>
<dbReference type="RefSeq" id="WP_010870478.1">
    <property type="nucleotide sequence ID" value="NC_000909.1"/>
</dbReference>
<dbReference type="SMR" id="Q58374"/>
<dbReference type="FunCoup" id="Q58374">
    <property type="interactions" value="125"/>
</dbReference>
<dbReference type="STRING" id="243232.MJ_0964"/>
<dbReference type="PaxDb" id="243232-MJ_0964"/>
<dbReference type="EnsemblBacteria" id="AAB98966">
    <property type="protein sequence ID" value="AAB98966"/>
    <property type="gene ID" value="MJ_0964"/>
</dbReference>
<dbReference type="GeneID" id="1451862"/>
<dbReference type="KEGG" id="mja:MJ_0964"/>
<dbReference type="eggNOG" id="arCOG01511">
    <property type="taxonomic scope" value="Archaea"/>
</dbReference>
<dbReference type="HOGENOM" id="CLU_002157_1_2_2"/>
<dbReference type="InParanoid" id="Q58374"/>
<dbReference type="OrthoDB" id="8261at2157"/>
<dbReference type="PhylomeDB" id="Q58374"/>
<dbReference type="Proteomes" id="UP000000805">
    <property type="component" value="Chromosome"/>
</dbReference>
<dbReference type="GO" id="GO:0005829">
    <property type="term" value="C:cytosol"/>
    <property type="evidence" value="ECO:0000318"/>
    <property type="project" value="GO_Central"/>
</dbReference>
<dbReference type="GO" id="GO:0017168">
    <property type="term" value="F:5-oxoprolinase (ATP-hydrolyzing) activity"/>
    <property type="evidence" value="ECO:0000318"/>
    <property type="project" value="GO_Central"/>
</dbReference>
<dbReference type="GO" id="GO:0006749">
    <property type="term" value="P:glutathione metabolic process"/>
    <property type="evidence" value="ECO:0000318"/>
    <property type="project" value="GO_Central"/>
</dbReference>
<dbReference type="InterPro" id="IPR049517">
    <property type="entry name" value="ACX-like_C"/>
</dbReference>
<dbReference type="InterPro" id="IPR043129">
    <property type="entry name" value="ATPase_NBD"/>
</dbReference>
<dbReference type="InterPro" id="IPR008040">
    <property type="entry name" value="Hydant_A_N"/>
</dbReference>
<dbReference type="InterPro" id="IPR002821">
    <property type="entry name" value="Hydantoinase_A"/>
</dbReference>
<dbReference type="InterPro" id="IPR045079">
    <property type="entry name" value="Oxoprolinase-like"/>
</dbReference>
<dbReference type="PANTHER" id="PTHR11365">
    <property type="entry name" value="5-OXOPROLINASE RELATED"/>
    <property type="match status" value="1"/>
</dbReference>
<dbReference type="PANTHER" id="PTHR11365:SF23">
    <property type="entry name" value="HYPOTHETICAL 5-OXOPROLINASE (EUROFUNG)-RELATED"/>
    <property type="match status" value="1"/>
</dbReference>
<dbReference type="Pfam" id="PF19278">
    <property type="entry name" value="Hydant_A_C"/>
    <property type="match status" value="1"/>
</dbReference>
<dbReference type="Pfam" id="PF05378">
    <property type="entry name" value="Hydant_A_N"/>
    <property type="match status" value="1"/>
</dbReference>
<dbReference type="Pfam" id="PF01968">
    <property type="entry name" value="Hydantoinase_A"/>
    <property type="match status" value="1"/>
</dbReference>
<dbReference type="SUPFAM" id="SSF53067">
    <property type="entry name" value="Actin-like ATPase domain"/>
    <property type="match status" value="1"/>
</dbReference>
<organism>
    <name type="scientific">Methanocaldococcus jannaschii (strain ATCC 43067 / DSM 2661 / JAL-1 / JCM 10045 / NBRC 100440)</name>
    <name type="common">Methanococcus jannaschii</name>
    <dbReference type="NCBI Taxonomy" id="243232"/>
    <lineage>
        <taxon>Archaea</taxon>
        <taxon>Methanobacteriati</taxon>
        <taxon>Methanobacteriota</taxon>
        <taxon>Methanomada group</taxon>
        <taxon>Methanococci</taxon>
        <taxon>Methanococcales</taxon>
        <taxon>Methanocaldococcaceae</taxon>
        <taxon>Methanocaldococcus</taxon>
    </lineage>
</organism>
<evidence type="ECO:0000305" key="1"/>
<accession>Q58374</accession>
<comment type="similarity">
    <text evidence="1">Belongs to the HyuA family.</text>
</comment>
<protein>
    <recommendedName>
        <fullName>Uncharacterized protein MJ0964</fullName>
    </recommendedName>
</protein>
<keyword id="KW-1185">Reference proteome</keyword>
<feature type="chain" id="PRO_0000208586" description="Uncharacterized protein MJ0964">
    <location>
        <begin position="1"/>
        <end position="680"/>
    </location>
</feature>
<gene>
    <name type="ordered locus">MJ0964</name>
</gene>
<reference key="1">
    <citation type="journal article" date="1996" name="Science">
        <title>Complete genome sequence of the methanogenic archaeon, Methanococcus jannaschii.</title>
        <authorList>
            <person name="Bult C.J."/>
            <person name="White O."/>
            <person name="Olsen G.J."/>
            <person name="Zhou L."/>
            <person name="Fleischmann R.D."/>
            <person name="Sutton G.G."/>
            <person name="Blake J.A."/>
            <person name="FitzGerald L.M."/>
            <person name="Clayton R.A."/>
            <person name="Gocayne J.D."/>
            <person name="Kerlavage A.R."/>
            <person name="Dougherty B.A."/>
            <person name="Tomb J.-F."/>
            <person name="Adams M.D."/>
            <person name="Reich C.I."/>
            <person name="Overbeek R."/>
            <person name="Kirkness E.F."/>
            <person name="Weinstock K.G."/>
            <person name="Merrick J.M."/>
            <person name="Glodek A."/>
            <person name="Scott J.L."/>
            <person name="Geoghagen N.S.M."/>
            <person name="Weidman J.F."/>
            <person name="Fuhrmann J.L."/>
            <person name="Nguyen D."/>
            <person name="Utterback T.R."/>
            <person name="Kelley J.M."/>
            <person name="Peterson J.D."/>
            <person name="Sadow P.W."/>
            <person name="Hanna M.C."/>
            <person name="Cotton M.D."/>
            <person name="Roberts K.M."/>
            <person name="Hurst M.A."/>
            <person name="Kaine B.P."/>
            <person name="Borodovsky M."/>
            <person name="Klenk H.-P."/>
            <person name="Fraser C.M."/>
            <person name="Smith H.O."/>
            <person name="Woese C.R."/>
            <person name="Venter J.C."/>
        </authorList>
    </citation>
    <scope>NUCLEOTIDE SEQUENCE [LARGE SCALE GENOMIC DNA]</scope>
    <source>
        <strain>ATCC 43067 / DSM 2661 / JAL-1 / JCM 10045 / NBRC 100440</strain>
    </source>
</reference>
<proteinExistence type="inferred from homology"/>